<protein>
    <recommendedName>
        <fullName>Apoptosis regulator Bcl-2 homolog</fullName>
    </recommendedName>
</protein>
<reference key="1">
    <citation type="journal article" date="2000" name="J. Virol.">
        <title>The genome of fowlpox virus.</title>
        <authorList>
            <person name="Afonso C.L."/>
            <person name="Tulman E.R."/>
            <person name="Lu Z."/>
            <person name="Zsak L."/>
            <person name="Kutish G.F."/>
            <person name="Rock D.L."/>
        </authorList>
    </citation>
    <scope>NUCLEOTIDE SEQUENCE [LARGE SCALE GENOMIC DNA]</scope>
</reference>
<reference key="2">
    <citation type="journal article" date="2007" name="J. Virol.">
        <title>Fowlpox virus encodes a Bcl-2 homologue that protects cells from apoptotic death through interaction with the proapoptotic protein Bak.</title>
        <authorList>
            <person name="Banadyga L."/>
            <person name="Gerig J."/>
            <person name="Stewart T."/>
            <person name="Barry M."/>
        </authorList>
    </citation>
    <scope>FUNCTION</scope>
    <scope>INTERACTION WITH HOST BAK1</scope>
    <scope>SUBCELLULAR LOCATION</scope>
</reference>
<reference key="3">
    <citation type="journal article" date="2009" name="J. Virol.">
        <title>The fowlpox virus BCL-2 homologue, FPV039, interacts with activated Bax and a discrete subset of BH3-only proteins to inhibit apoptosis.</title>
        <authorList>
            <person name="Banadyga L."/>
            <person name="Veugelers K."/>
            <person name="Campbell S."/>
            <person name="Barry M."/>
        </authorList>
    </citation>
    <scope>FUNCTION</scope>
    <scope>INTERACTION WITH HOST BAX</scope>
</reference>
<reference key="4">
    <citation type="journal article" date="2017" name="J. Biol. Chem.">
        <title>Structural basis of apoptosis inhibition by the fowlpox virus protein FPV039.</title>
        <authorList>
            <person name="Anasir M.I."/>
            <person name="Caria S."/>
            <person name="Skinner M.A."/>
            <person name="Kvansakul M."/>
        </authorList>
    </citation>
    <scope>X-RAY CRYSTALLOGRAPHY (1.35 ANGSTROMS) OF 1-143</scope>
</reference>
<sequence>MASSNMKDETYYIALNMIQNYIIEYNTNKPRKSFVIDSISYDVLKAACKSVIKTNYNEFDIIISRNIDFNVIVTQVLEDKINWGRIITIIAFCAYYSKKVKQDTSPQYYDGIISEAITDAILSKYRSWFIDQDYWNGIRIYKNYSYIFNTASYCIFTASLIIASLAVFKICSFYM</sequence>
<organismHost>
    <name type="scientific">Vertebrata</name>
    <dbReference type="NCBI Taxonomy" id="7742"/>
</organismHost>
<evidence type="ECO:0000269" key="1">
    <source>
    </source>
</evidence>
<evidence type="ECO:0000269" key="2">
    <source>
    </source>
</evidence>
<evidence type="ECO:0000305" key="3"/>
<evidence type="ECO:0007829" key="4">
    <source>
        <dbReference type="PDB" id="5TZP"/>
    </source>
</evidence>
<accession>Q9J5G4</accession>
<dbReference type="EMBL" id="AF198100">
    <property type="protein sequence ID" value="AAF44383.1"/>
    <property type="molecule type" value="Genomic_DNA"/>
</dbReference>
<dbReference type="RefSeq" id="NP_039002.1">
    <property type="nucleotide sequence ID" value="NC_002188.1"/>
</dbReference>
<dbReference type="PDB" id="5TZP">
    <property type="method" value="X-ray"/>
    <property type="resolution" value="1.35 A"/>
    <property type="chains" value="A=1-143"/>
</dbReference>
<dbReference type="PDB" id="5TZQ">
    <property type="method" value="X-ray"/>
    <property type="resolution" value="1.65 A"/>
    <property type="chains" value="A/B=1-143"/>
</dbReference>
<dbReference type="PDBsum" id="5TZP"/>
<dbReference type="PDBsum" id="5TZQ"/>
<dbReference type="SASBDB" id="Q9J5G4"/>
<dbReference type="SMR" id="Q9J5G4"/>
<dbReference type="GeneID" id="1486587"/>
<dbReference type="KEGG" id="vg:1486587"/>
<dbReference type="Proteomes" id="UP000008597">
    <property type="component" value="Segment"/>
</dbReference>
<dbReference type="GO" id="GO:0033650">
    <property type="term" value="C:host cell mitochondrion"/>
    <property type="evidence" value="ECO:0007669"/>
    <property type="project" value="UniProtKB-SubCell"/>
</dbReference>
<dbReference type="GO" id="GO:0042981">
    <property type="term" value="P:regulation of apoptotic process"/>
    <property type="evidence" value="ECO:0007669"/>
    <property type="project" value="InterPro"/>
</dbReference>
<dbReference type="GO" id="GO:0033668">
    <property type="term" value="P:symbiont-mediated suppression of host apoptosis"/>
    <property type="evidence" value="ECO:0007669"/>
    <property type="project" value="UniProtKB-KW"/>
</dbReference>
<dbReference type="Gene3D" id="1.10.437.10">
    <property type="entry name" value="Blc2-like"/>
    <property type="match status" value="1"/>
</dbReference>
<dbReference type="InterPro" id="IPR036834">
    <property type="entry name" value="Bcl-2-like_sf"/>
</dbReference>
<dbReference type="InterPro" id="IPR046371">
    <property type="entry name" value="Bcl-2_BH1-3"/>
</dbReference>
<dbReference type="InterPro" id="IPR002475">
    <property type="entry name" value="Bcl2-like"/>
</dbReference>
<dbReference type="InterPro" id="IPR020717">
    <property type="entry name" value="Bcl2_BH1_motif_CS"/>
</dbReference>
<dbReference type="Pfam" id="PF00452">
    <property type="entry name" value="Bcl-2"/>
    <property type="match status" value="1"/>
</dbReference>
<dbReference type="SUPFAM" id="SSF56854">
    <property type="entry name" value="Bcl-2 inhibitors of programmed cell death"/>
    <property type="match status" value="1"/>
</dbReference>
<dbReference type="PROSITE" id="PS50062">
    <property type="entry name" value="BCL2_FAMILY"/>
    <property type="match status" value="1"/>
</dbReference>
<dbReference type="PROSITE" id="PS01080">
    <property type="entry name" value="BH1"/>
    <property type="match status" value="1"/>
</dbReference>
<feature type="chain" id="PRO_0000143093" description="Apoptosis regulator Bcl-2 homolog">
    <location>
        <begin position="1"/>
        <end position="175"/>
    </location>
</feature>
<feature type="short sequence motif" description="BH1">
    <location>
        <begin position="75"/>
        <end position="94"/>
    </location>
</feature>
<feature type="short sequence motif" description="BH2">
    <location>
        <begin position="105"/>
        <end position="120"/>
    </location>
</feature>
<feature type="helix" evidence="4">
    <location>
        <begin position="9"/>
        <end position="27"/>
    </location>
</feature>
<feature type="helix" evidence="4">
    <location>
        <begin position="32"/>
        <end position="34"/>
    </location>
</feature>
<feature type="helix" evidence="4">
    <location>
        <begin position="38"/>
        <end position="63"/>
    </location>
</feature>
<feature type="helix" evidence="4">
    <location>
        <begin position="69"/>
        <end position="76"/>
    </location>
</feature>
<feature type="helix" evidence="4">
    <location>
        <begin position="83"/>
        <end position="100"/>
    </location>
</feature>
<feature type="strand" evidence="4">
    <location>
        <begin position="103"/>
        <end position="105"/>
    </location>
</feature>
<feature type="helix" evidence="4">
    <location>
        <begin position="110"/>
        <end position="131"/>
    </location>
</feature>
<feature type="helix" evidence="4">
    <location>
        <begin position="134"/>
        <end position="141"/>
    </location>
</feature>
<name>ARBH_FOWPN</name>
<keyword id="KW-0002">3D-structure</keyword>
<keyword id="KW-0053">Apoptosis</keyword>
<keyword id="KW-1045">Host mitochondrion</keyword>
<keyword id="KW-0945">Host-virus interaction</keyword>
<keyword id="KW-1081">Inhibition of host apoptosis by viral BCL2-like protein</keyword>
<keyword id="KW-1119">Modulation of host cell apoptosis by virus</keyword>
<keyword id="KW-1185">Reference proteome</keyword>
<proteinExistence type="evidence at protein level"/>
<comment type="function">
    <text evidence="2">Plays a role in the inhibition of host apoptosis by sequestering and inactivating multiple proapoptotic BCL-2 proteins, including BAK1 and BAX.</text>
</comment>
<comment type="subunit">
    <text evidence="1 2">Interacts with host BAX; this interaction inhibits BAX oligomerization and subsequent activation. Interacts with host BAK1.</text>
</comment>
<comment type="subcellular location">
    <subcellularLocation>
        <location evidence="1">Host mitochondrion</location>
    </subcellularLocation>
</comment>
<comment type="similarity">
    <text evidence="3">Belongs to the Bcl-2 family.</text>
</comment>
<organism>
    <name type="scientific">Fowlpox virus (strain NVSL)</name>
    <name type="common">FPV</name>
    <dbReference type="NCBI Taxonomy" id="928301"/>
    <lineage>
        <taxon>Viruses</taxon>
        <taxon>Varidnaviria</taxon>
        <taxon>Bamfordvirae</taxon>
        <taxon>Nucleocytoviricota</taxon>
        <taxon>Pokkesviricetes</taxon>
        <taxon>Chitovirales</taxon>
        <taxon>Poxviridae</taxon>
        <taxon>Chordopoxvirinae</taxon>
        <taxon>Avipoxvirus</taxon>
        <taxon>Fowlpox virus</taxon>
    </lineage>
</organism>
<gene>
    <name type="ordered locus">FPV039</name>
</gene>